<gene>
    <name type="primary">echA12</name>
    <name type="synonym">fadB2</name>
    <name type="ordered locus">Rv1472</name>
    <name type="ORF">MTV007.19</name>
</gene>
<evidence type="ECO:0000250" key="1"/>
<evidence type="ECO:0000305" key="2"/>
<comment type="function">
    <text evidence="1">Could possibly oxidize fatty acids using specific components.</text>
</comment>
<comment type="catalytic activity">
    <reaction>
        <text>a (3S)-3-hydroxyacyl-CoA = a (2E)-enoyl-CoA + H2O</text>
        <dbReference type="Rhea" id="RHEA:16105"/>
        <dbReference type="ChEBI" id="CHEBI:15377"/>
        <dbReference type="ChEBI" id="CHEBI:57318"/>
        <dbReference type="ChEBI" id="CHEBI:58856"/>
        <dbReference type="EC" id="4.2.1.17"/>
    </reaction>
</comment>
<comment type="catalytic activity">
    <reaction>
        <text>a 4-saturated-(3S)-3-hydroxyacyl-CoA = a (3E)-enoyl-CoA + H2O</text>
        <dbReference type="Rhea" id="RHEA:20724"/>
        <dbReference type="ChEBI" id="CHEBI:15377"/>
        <dbReference type="ChEBI" id="CHEBI:58521"/>
        <dbReference type="ChEBI" id="CHEBI:137480"/>
        <dbReference type="EC" id="4.2.1.17"/>
    </reaction>
</comment>
<comment type="similarity">
    <text evidence="2">Belongs to the enoyl-CoA hydratase/isomerase family.</text>
</comment>
<organism>
    <name type="scientific">Mycobacterium tuberculosis (strain ATCC 25618 / H37Rv)</name>
    <dbReference type="NCBI Taxonomy" id="83332"/>
    <lineage>
        <taxon>Bacteria</taxon>
        <taxon>Bacillati</taxon>
        <taxon>Actinomycetota</taxon>
        <taxon>Actinomycetes</taxon>
        <taxon>Mycobacteriales</taxon>
        <taxon>Mycobacteriaceae</taxon>
        <taxon>Mycobacterium</taxon>
        <taxon>Mycobacterium tuberculosis complex</taxon>
    </lineage>
</organism>
<sequence>MPHRCAAQVVAGYRSTVSLVLVEHPRPEIAQITLNRPERMNSMAFDVMVPLKEALAQVSYDNSVRVVVLTGAGRGFSPGADHKSAGVVPHVENLTRPTYALRSMELLDDVILMLRRLHQPVIAAVNGPAIGGGLCLALAADIRVASSSAYFRAAGINNGLTASELGLSYLLPRAIGSSRAFEIMLTGRDVSAEEAERIGLVSRQVPDEQLLDACYAIAARMAGFSRPGIELTKRTLWSGLDAASLEAHMQAEGLGQLFVRLLTANFEEAVAARAEQRAPVFTDDT</sequence>
<dbReference type="EC" id="4.2.1.17"/>
<dbReference type="EMBL" id="AL123456">
    <property type="protein sequence ID" value="CCP44231.1"/>
    <property type="molecule type" value="Genomic_DNA"/>
</dbReference>
<dbReference type="PIR" id="C70873">
    <property type="entry name" value="C70873"/>
</dbReference>
<dbReference type="RefSeq" id="NP_215988.1">
    <property type="nucleotide sequence ID" value="NC_000962.3"/>
</dbReference>
<dbReference type="RefSeq" id="WP_003898888.1">
    <property type="nucleotide sequence ID" value="NZ_NVQJ01000004.1"/>
</dbReference>
<dbReference type="SMR" id="P9WNN7"/>
<dbReference type="FunCoup" id="P9WNN7">
    <property type="interactions" value="101"/>
</dbReference>
<dbReference type="STRING" id="83332.Rv1472"/>
<dbReference type="PaxDb" id="83332-Rv1472"/>
<dbReference type="DNASU" id="886547"/>
<dbReference type="GeneID" id="886547"/>
<dbReference type="KEGG" id="mtu:Rv1472"/>
<dbReference type="KEGG" id="mtv:RVBD_1472"/>
<dbReference type="PATRIC" id="fig|83332.111.peg.1638"/>
<dbReference type="TubercuList" id="Rv1472"/>
<dbReference type="eggNOG" id="COG1024">
    <property type="taxonomic scope" value="Bacteria"/>
</dbReference>
<dbReference type="InParanoid" id="P9WNN7"/>
<dbReference type="OrthoDB" id="9777711at2"/>
<dbReference type="PhylomeDB" id="P9WNN7"/>
<dbReference type="Proteomes" id="UP000001584">
    <property type="component" value="Chromosome"/>
</dbReference>
<dbReference type="GO" id="GO:0005886">
    <property type="term" value="C:plasma membrane"/>
    <property type="evidence" value="ECO:0007005"/>
    <property type="project" value="MTBBASE"/>
</dbReference>
<dbReference type="GO" id="GO:0004300">
    <property type="term" value="F:enoyl-CoA hydratase activity"/>
    <property type="evidence" value="ECO:0007669"/>
    <property type="project" value="UniProtKB-EC"/>
</dbReference>
<dbReference type="GO" id="GO:0006635">
    <property type="term" value="P:fatty acid beta-oxidation"/>
    <property type="evidence" value="ECO:0000318"/>
    <property type="project" value="GO_Central"/>
</dbReference>
<dbReference type="CDD" id="cd06558">
    <property type="entry name" value="crotonase-like"/>
    <property type="match status" value="1"/>
</dbReference>
<dbReference type="FunFam" id="3.90.226.10:FF:000078">
    <property type="entry name" value="Enoyl-CoA hydratase EchA12"/>
    <property type="match status" value="1"/>
</dbReference>
<dbReference type="Gene3D" id="3.90.226.10">
    <property type="entry name" value="2-enoyl-CoA Hydratase, Chain A, domain 1"/>
    <property type="match status" value="1"/>
</dbReference>
<dbReference type="Gene3D" id="1.10.12.10">
    <property type="entry name" value="Lyase 2-enoyl-coa Hydratase, Chain A, domain 2"/>
    <property type="match status" value="1"/>
</dbReference>
<dbReference type="InterPro" id="IPR029045">
    <property type="entry name" value="ClpP/crotonase-like_dom_sf"/>
</dbReference>
<dbReference type="InterPro" id="IPR018376">
    <property type="entry name" value="Enoyl-CoA_hyd/isom_CS"/>
</dbReference>
<dbReference type="InterPro" id="IPR001753">
    <property type="entry name" value="Enoyl-CoA_hydra/iso"/>
</dbReference>
<dbReference type="InterPro" id="IPR014748">
    <property type="entry name" value="Enoyl-CoA_hydra_C"/>
</dbReference>
<dbReference type="NCBIfam" id="NF004519">
    <property type="entry name" value="PRK05864.1"/>
    <property type="match status" value="1"/>
</dbReference>
<dbReference type="PANTHER" id="PTHR43802">
    <property type="entry name" value="ENOYL-COA HYDRATASE"/>
    <property type="match status" value="1"/>
</dbReference>
<dbReference type="PANTHER" id="PTHR43802:SF1">
    <property type="entry name" value="IP11341P-RELATED"/>
    <property type="match status" value="1"/>
</dbReference>
<dbReference type="Pfam" id="PF00378">
    <property type="entry name" value="ECH_1"/>
    <property type="match status" value="1"/>
</dbReference>
<dbReference type="SUPFAM" id="SSF52096">
    <property type="entry name" value="ClpP/crotonase"/>
    <property type="match status" value="1"/>
</dbReference>
<dbReference type="PROSITE" id="PS00166">
    <property type="entry name" value="ENOYL_COA_HYDRATASE"/>
    <property type="match status" value="1"/>
</dbReference>
<keyword id="KW-0276">Fatty acid metabolism</keyword>
<keyword id="KW-0443">Lipid metabolism</keyword>
<keyword id="KW-0456">Lyase</keyword>
<keyword id="KW-1185">Reference proteome</keyword>
<feature type="chain" id="PRO_0000109341" description="Probable enoyl-CoA hydratase EchA12">
    <location>
        <begin position="1"/>
        <end position="285"/>
    </location>
</feature>
<protein>
    <recommendedName>
        <fullName>Probable enoyl-CoA hydratase EchA12</fullName>
        <ecNumber>4.2.1.17</ecNumber>
    </recommendedName>
</protein>
<accession>P9WNN7</accession>
<accession>L0T6R6</accession>
<accession>O53163</accession>
<proteinExistence type="evidence at protein level"/>
<name>ECH12_MYCTU</name>
<reference key="1">
    <citation type="journal article" date="1998" name="Nature">
        <title>Deciphering the biology of Mycobacterium tuberculosis from the complete genome sequence.</title>
        <authorList>
            <person name="Cole S.T."/>
            <person name="Brosch R."/>
            <person name="Parkhill J."/>
            <person name="Garnier T."/>
            <person name="Churcher C.M."/>
            <person name="Harris D.E."/>
            <person name="Gordon S.V."/>
            <person name="Eiglmeier K."/>
            <person name="Gas S."/>
            <person name="Barry C.E. III"/>
            <person name="Tekaia F."/>
            <person name="Badcock K."/>
            <person name="Basham D."/>
            <person name="Brown D."/>
            <person name="Chillingworth T."/>
            <person name="Connor R."/>
            <person name="Davies R.M."/>
            <person name="Devlin K."/>
            <person name="Feltwell T."/>
            <person name="Gentles S."/>
            <person name="Hamlin N."/>
            <person name="Holroyd S."/>
            <person name="Hornsby T."/>
            <person name="Jagels K."/>
            <person name="Krogh A."/>
            <person name="McLean J."/>
            <person name="Moule S."/>
            <person name="Murphy L.D."/>
            <person name="Oliver S."/>
            <person name="Osborne J."/>
            <person name="Quail M.A."/>
            <person name="Rajandream M.A."/>
            <person name="Rogers J."/>
            <person name="Rutter S."/>
            <person name="Seeger K."/>
            <person name="Skelton S."/>
            <person name="Squares S."/>
            <person name="Squares R."/>
            <person name="Sulston J.E."/>
            <person name="Taylor K."/>
            <person name="Whitehead S."/>
            <person name="Barrell B.G."/>
        </authorList>
    </citation>
    <scope>NUCLEOTIDE SEQUENCE [LARGE SCALE GENOMIC DNA]</scope>
    <source>
        <strain>ATCC 25618 / H37Rv</strain>
    </source>
</reference>
<reference key="2">
    <citation type="journal article" date="2011" name="Mol. Cell. Proteomics">
        <title>Proteogenomic analysis of Mycobacterium tuberculosis by high resolution mass spectrometry.</title>
        <authorList>
            <person name="Kelkar D.S."/>
            <person name="Kumar D."/>
            <person name="Kumar P."/>
            <person name="Balakrishnan L."/>
            <person name="Muthusamy B."/>
            <person name="Yadav A.K."/>
            <person name="Shrivastava P."/>
            <person name="Marimuthu A."/>
            <person name="Anand S."/>
            <person name="Sundaram H."/>
            <person name="Kingsbury R."/>
            <person name="Harsha H.C."/>
            <person name="Nair B."/>
            <person name="Prasad T.S."/>
            <person name="Chauhan D.S."/>
            <person name="Katoch K."/>
            <person name="Katoch V.M."/>
            <person name="Kumar P."/>
            <person name="Chaerkady R."/>
            <person name="Ramachandran S."/>
            <person name="Dash D."/>
            <person name="Pandey A."/>
        </authorList>
    </citation>
    <scope>IDENTIFICATION BY MASS SPECTROMETRY [LARGE SCALE ANALYSIS]</scope>
    <source>
        <strain>ATCC 25618 / H37Rv</strain>
    </source>
</reference>